<proteinExistence type="inferred from homology"/>
<name>SYT_CORGL</name>
<accession>Q8NPZ0</accession>
<accession>Q6M4V6</accession>
<evidence type="ECO:0000255" key="1">
    <source>
        <dbReference type="HAMAP-Rule" id="MF_00184"/>
    </source>
</evidence>
<evidence type="ECO:0000255" key="2">
    <source>
        <dbReference type="PROSITE-ProRule" id="PRU01228"/>
    </source>
</evidence>
<evidence type="ECO:0000305" key="3"/>
<organism>
    <name type="scientific">Corynebacterium glutamicum (strain ATCC 13032 / DSM 20300 / JCM 1318 / BCRC 11384 / CCUG 27702 / LMG 3730 / NBRC 12168 / NCIMB 10025 / NRRL B-2784 / 534)</name>
    <dbReference type="NCBI Taxonomy" id="196627"/>
    <lineage>
        <taxon>Bacteria</taxon>
        <taxon>Bacillati</taxon>
        <taxon>Actinomycetota</taxon>
        <taxon>Actinomycetes</taxon>
        <taxon>Mycobacteriales</taxon>
        <taxon>Corynebacteriaceae</taxon>
        <taxon>Corynebacterium</taxon>
    </lineage>
</organism>
<feature type="chain" id="PRO_0000100970" description="Threonine--tRNA ligase">
    <location>
        <begin position="1"/>
        <end position="695"/>
    </location>
</feature>
<feature type="domain" description="TGS" evidence="2">
    <location>
        <begin position="6"/>
        <end position="75"/>
    </location>
</feature>
<feature type="region of interest" description="Catalytic" evidence="1">
    <location>
        <begin position="274"/>
        <end position="580"/>
    </location>
</feature>
<feature type="binding site" evidence="1">
    <location>
        <position position="379"/>
    </location>
    <ligand>
        <name>Zn(2+)</name>
        <dbReference type="ChEBI" id="CHEBI:29105"/>
    </ligand>
</feature>
<feature type="binding site" evidence="1">
    <location>
        <position position="430"/>
    </location>
    <ligand>
        <name>Zn(2+)</name>
        <dbReference type="ChEBI" id="CHEBI:29105"/>
    </ligand>
</feature>
<feature type="binding site" evidence="1">
    <location>
        <position position="557"/>
    </location>
    <ligand>
        <name>Zn(2+)</name>
        <dbReference type="ChEBI" id="CHEBI:29105"/>
    </ligand>
</feature>
<dbReference type="EC" id="6.1.1.3" evidence="1"/>
<dbReference type="EMBL" id="BA000036">
    <property type="protein sequence ID" value="BAB99064.1"/>
    <property type="status" value="ALT_INIT"/>
    <property type="molecule type" value="Genomic_DNA"/>
</dbReference>
<dbReference type="EMBL" id="BX927153">
    <property type="protein sequence ID" value="CAF20053.1"/>
    <property type="status" value="ALT_INIT"/>
    <property type="molecule type" value="Genomic_DNA"/>
</dbReference>
<dbReference type="RefSeq" id="NP_600883.1">
    <property type="nucleotide sequence ID" value="NC_003450.3"/>
</dbReference>
<dbReference type="SMR" id="Q8NPZ0"/>
<dbReference type="STRING" id="196627.cg1880"/>
<dbReference type="KEGG" id="cgb:cg1880"/>
<dbReference type="KEGG" id="cgl:Cgl1671"/>
<dbReference type="PATRIC" id="fig|196627.13.peg.1631"/>
<dbReference type="eggNOG" id="COG0441">
    <property type="taxonomic scope" value="Bacteria"/>
</dbReference>
<dbReference type="HOGENOM" id="CLU_008554_0_1_11"/>
<dbReference type="OrthoDB" id="9802304at2"/>
<dbReference type="BioCyc" id="CORYNE:G18NG-11256-MONOMER"/>
<dbReference type="Proteomes" id="UP000000582">
    <property type="component" value="Chromosome"/>
</dbReference>
<dbReference type="Proteomes" id="UP000001009">
    <property type="component" value="Chromosome"/>
</dbReference>
<dbReference type="GO" id="GO:0005737">
    <property type="term" value="C:cytoplasm"/>
    <property type="evidence" value="ECO:0007669"/>
    <property type="project" value="UniProtKB-SubCell"/>
</dbReference>
<dbReference type="GO" id="GO:0005524">
    <property type="term" value="F:ATP binding"/>
    <property type="evidence" value="ECO:0007669"/>
    <property type="project" value="UniProtKB-UniRule"/>
</dbReference>
<dbReference type="GO" id="GO:0046872">
    <property type="term" value="F:metal ion binding"/>
    <property type="evidence" value="ECO:0007669"/>
    <property type="project" value="UniProtKB-KW"/>
</dbReference>
<dbReference type="GO" id="GO:0004829">
    <property type="term" value="F:threonine-tRNA ligase activity"/>
    <property type="evidence" value="ECO:0007669"/>
    <property type="project" value="UniProtKB-UniRule"/>
</dbReference>
<dbReference type="GO" id="GO:0000049">
    <property type="term" value="F:tRNA binding"/>
    <property type="evidence" value="ECO:0007669"/>
    <property type="project" value="UniProtKB-KW"/>
</dbReference>
<dbReference type="GO" id="GO:0006435">
    <property type="term" value="P:threonyl-tRNA aminoacylation"/>
    <property type="evidence" value="ECO:0007669"/>
    <property type="project" value="UniProtKB-UniRule"/>
</dbReference>
<dbReference type="CDD" id="cd00860">
    <property type="entry name" value="ThrRS_anticodon"/>
    <property type="match status" value="1"/>
</dbReference>
<dbReference type="CDD" id="cd00771">
    <property type="entry name" value="ThrRS_core"/>
    <property type="match status" value="1"/>
</dbReference>
<dbReference type="FunFam" id="3.30.54.20:FF:000003">
    <property type="entry name" value="Threonine--tRNA ligase"/>
    <property type="match status" value="1"/>
</dbReference>
<dbReference type="FunFam" id="3.30.930.10:FF:000019">
    <property type="entry name" value="Threonine--tRNA ligase"/>
    <property type="match status" value="1"/>
</dbReference>
<dbReference type="FunFam" id="3.40.50.800:FF:000001">
    <property type="entry name" value="Threonine--tRNA ligase"/>
    <property type="match status" value="1"/>
</dbReference>
<dbReference type="FunFam" id="3.30.980.10:FF:000005">
    <property type="entry name" value="Threonyl-tRNA synthetase, mitochondrial"/>
    <property type="match status" value="1"/>
</dbReference>
<dbReference type="Gene3D" id="3.30.54.20">
    <property type="match status" value="1"/>
</dbReference>
<dbReference type="Gene3D" id="3.40.50.800">
    <property type="entry name" value="Anticodon-binding domain"/>
    <property type="match status" value="1"/>
</dbReference>
<dbReference type="Gene3D" id="3.30.930.10">
    <property type="entry name" value="Bira Bifunctional Protein, Domain 2"/>
    <property type="match status" value="1"/>
</dbReference>
<dbReference type="Gene3D" id="3.30.980.10">
    <property type="entry name" value="Threonyl-trna Synthetase, Chain A, domain 2"/>
    <property type="match status" value="1"/>
</dbReference>
<dbReference type="HAMAP" id="MF_00184">
    <property type="entry name" value="Thr_tRNA_synth"/>
    <property type="match status" value="1"/>
</dbReference>
<dbReference type="InterPro" id="IPR002314">
    <property type="entry name" value="aa-tRNA-synt_IIb"/>
</dbReference>
<dbReference type="InterPro" id="IPR006195">
    <property type="entry name" value="aa-tRNA-synth_II"/>
</dbReference>
<dbReference type="InterPro" id="IPR045864">
    <property type="entry name" value="aa-tRNA-synth_II/BPL/LPL"/>
</dbReference>
<dbReference type="InterPro" id="IPR004154">
    <property type="entry name" value="Anticodon-bd"/>
</dbReference>
<dbReference type="InterPro" id="IPR036621">
    <property type="entry name" value="Anticodon-bd_dom_sf"/>
</dbReference>
<dbReference type="InterPro" id="IPR004095">
    <property type="entry name" value="TGS"/>
</dbReference>
<dbReference type="InterPro" id="IPR002320">
    <property type="entry name" value="Thr-tRNA-ligase_IIa"/>
</dbReference>
<dbReference type="InterPro" id="IPR018163">
    <property type="entry name" value="Thr/Ala-tRNA-synth_IIc_edit"/>
</dbReference>
<dbReference type="InterPro" id="IPR047246">
    <property type="entry name" value="ThrRS_anticodon"/>
</dbReference>
<dbReference type="InterPro" id="IPR033728">
    <property type="entry name" value="ThrRS_core"/>
</dbReference>
<dbReference type="InterPro" id="IPR012947">
    <property type="entry name" value="tRNA_SAD"/>
</dbReference>
<dbReference type="NCBIfam" id="TIGR00418">
    <property type="entry name" value="thrS"/>
    <property type="match status" value="1"/>
</dbReference>
<dbReference type="PANTHER" id="PTHR11451:SF44">
    <property type="entry name" value="THREONINE--TRNA LIGASE, CHLOROPLASTIC_MITOCHONDRIAL 2"/>
    <property type="match status" value="1"/>
</dbReference>
<dbReference type="PANTHER" id="PTHR11451">
    <property type="entry name" value="THREONINE-TRNA LIGASE"/>
    <property type="match status" value="1"/>
</dbReference>
<dbReference type="Pfam" id="PF03129">
    <property type="entry name" value="HGTP_anticodon"/>
    <property type="match status" value="1"/>
</dbReference>
<dbReference type="Pfam" id="PF00587">
    <property type="entry name" value="tRNA-synt_2b"/>
    <property type="match status" value="1"/>
</dbReference>
<dbReference type="Pfam" id="PF07973">
    <property type="entry name" value="tRNA_SAD"/>
    <property type="match status" value="1"/>
</dbReference>
<dbReference type="PRINTS" id="PR01047">
    <property type="entry name" value="TRNASYNTHTHR"/>
</dbReference>
<dbReference type="SMART" id="SM00863">
    <property type="entry name" value="tRNA_SAD"/>
    <property type="match status" value="1"/>
</dbReference>
<dbReference type="SUPFAM" id="SSF52954">
    <property type="entry name" value="Class II aaRS ABD-related"/>
    <property type="match status" value="1"/>
</dbReference>
<dbReference type="SUPFAM" id="SSF55681">
    <property type="entry name" value="Class II aaRS and biotin synthetases"/>
    <property type="match status" value="1"/>
</dbReference>
<dbReference type="SUPFAM" id="SSF55186">
    <property type="entry name" value="ThrRS/AlaRS common domain"/>
    <property type="match status" value="1"/>
</dbReference>
<dbReference type="PROSITE" id="PS50862">
    <property type="entry name" value="AA_TRNA_LIGASE_II"/>
    <property type="match status" value="1"/>
</dbReference>
<dbReference type="PROSITE" id="PS51880">
    <property type="entry name" value="TGS"/>
    <property type="match status" value="1"/>
</dbReference>
<comment type="function">
    <text evidence="1">Catalyzes the attachment of threonine to tRNA(Thr) in a two-step reaction: L-threonine is first activated by ATP to form Thr-AMP and then transferred to the acceptor end of tRNA(Thr). Also edits incorrectly charged L-seryl-tRNA(Thr).</text>
</comment>
<comment type="catalytic activity">
    <reaction evidence="1">
        <text>tRNA(Thr) + L-threonine + ATP = L-threonyl-tRNA(Thr) + AMP + diphosphate + H(+)</text>
        <dbReference type="Rhea" id="RHEA:24624"/>
        <dbReference type="Rhea" id="RHEA-COMP:9670"/>
        <dbReference type="Rhea" id="RHEA-COMP:9704"/>
        <dbReference type="ChEBI" id="CHEBI:15378"/>
        <dbReference type="ChEBI" id="CHEBI:30616"/>
        <dbReference type="ChEBI" id="CHEBI:33019"/>
        <dbReference type="ChEBI" id="CHEBI:57926"/>
        <dbReference type="ChEBI" id="CHEBI:78442"/>
        <dbReference type="ChEBI" id="CHEBI:78534"/>
        <dbReference type="ChEBI" id="CHEBI:456215"/>
        <dbReference type="EC" id="6.1.1.3"/>
    </reaction>
</comment>
<comment type="cofactor">
    <cofactor evidence="1">
        <name>Zn(2+)</name>
        <dbReference type="ChEBI" id="CHEBI:29105"/>
    </cofactor>
    <text evidence="1">Binds 1 zinc ion per subunit.</text>
</comment>
<comment type="subunit">
    <text evidence="1">Homodimer.</text>
</comment>
<comment type="subcellular location">
    <subcellularLocation>
        <location evidence="1">Cytoplasm</location>
    </subcellularLocation>
</comment>
<comment type="similarity">
    <text evidence="1">Belongs to the class-II aminoacyl-tRNA synthetase family.</text>
</comment>
<comment type="sequence caution" evidence="3">
    <conflict type="erroneous initiation">
        <sequence resource="EMBL-CDS" id="BAB99064"/>
    </conflict>
    <text>Truncated N-terminus.</text>
</comment>
<comment type="sequence caution" evidence="3">
    <conflict type="erroneous initiation">
        <sequence resource="EMBL-CDS" id="CAF20053"/>
    </conflict>
    <text>Extended N-terminus.</text>
</comment>
<protein>
    <recommendedName>
        <fullName evidence="1">Threonine--tRNA ligase</fullName>
        <ecNumber evidence="1">6.1.1.3</ecNumber>
    </recommendedName>
    <alternativeName>
        <fullName evidence="1">Threonyl-tRNA synthetase</fullName>
        <shortName evidence="1">ThrRS</shortName>
    </alternativeName>
</protein>
<gene>
    <name evidence="1" type="primary">thrS</name>
    <name type="ordered locus">Cgl1671</name>
    <name type="ordered locus">cg1880</name>
</gene>
<keyword id="KW-0030">Aminoacyl-tRNA synthetase</keyword>
<keyword id="KW-0067">ATP-binding</keyword>
<keyword id="KW-0963">Cytoplasm</keyword>
<keyword id="KW-0436">Ligase</keyword>
<keyword id="KW-0479">Metal-binding</keyword>
<keyword id="KW-0547">Nucleotide-binding</keyword>
<keyword id="KW-0648">Protein biosynthesis</keyword>
<keyword id="KW-1185">Reference proteome</keyword>
<keyword id="KW-0694">RNA-binding</keyword>
<keyword id="KW-0820">tRNA-binding</keyword>
<keyword id="KW-0862">Zinc</keyword>
<sequence length="695" mass="77621">MSARRSAIFVNTTDTAVANLVVFEVPAGTAIGAAMRELDLPNKGPEAIVCAKDAEGQLKDLSHVPETTATFTAVPANTDDGRAVIRHSCAHVLAQAVQAEFPGTKLGIGPAIENGFYYDFDAAEPFTPEDLKTIEKRMKKIIKTGQKFERRVYESAEAAAEELKNEPYKLELIQDKGNVDPNSDEATEVGAGELTAYDNVNPRTSEVEWSDLCRGPHIPTTRYIPAFALTRSSAAYWRGDQDNAGLQRIYGTAWEDKESLDAYQTMLAEAEKRDHRRLGTELDLFSFPDDLGSGLPVFHPNGGIVRNEMEDHSRRRHIAAGYSFVNTPHITKQDLFERSGHLGFYKDGMFPPMQVDAEFDEDGNVTKPGQEYYLKPMNCPMHNLIFDSRGRSYRELPLRLFEFGNVYRYEKSGVIHGLTRARGFTQDDAHIYCTEDQLEAELTSVLDFILSLLRDYGLDDFYLELSTRDPKKSVGSDEIWERSTEILNRVATNSGLELVPDPEGAAFYGPKISVQARDAIGRTWQMSTVQLDFNMPERFNLEYTSSDGSKQQPIMIHRALFGSIERFFGVLLEHYAGAFPAWLAPHQVMGIPVADDCIPHLETITAQLREKGIRADVDTSDDRMQKKIRNHTTGKVPFMLLAGARDVEANAVSFRFLDGTQVNGVPVDEAIAVISSWIGDRINDQPSEDSIAARR</sequence>
<reference key="1">
    <citation type="journal article" date="2003" name="Appl. Microbiol. Biotechnol.">
        <title>The Corynebacterium glutamicum genome: features and impacts on biotechnological processes.</title>
        <authorList>
            <person name="Ikeda M."/>
            <person name="Nakagawa S."/>
        </authorList>
    </citation>
    <scope>NUCLEOTIDE SEQUENCE [LARGE SCALE GENOMIC DNA]</scope>
    <source>
        <strain>ATCC 13032 / DSM 20300 / JCM 1318 / BCRC 11384 / CCUG 27702 / LMG 3730 / NBRC 12168 / NCIMB 10025 / NRRL B-2784 / 534</strain>
    </source>
</reference>
<reference key="2">
    <citation type="journal article" date="2003" name="J. Biotechnol.">
        <title>The complete Corynebacterium glutamicum ATCC 13032 genome sequence and its impact on the production of L-aspartate-derived amino acids and vitamins.</title>
        <authorList>
            <person name="Kalinowski J."/>
            <person name="Bathe B."/>
            <person name="Bartels D."/>
            <person name="Bischoff N."/>
            <person name="Bott M."/>
            <person name="Burkovski A."/>
            <person name="Dusch N."/>
            <person name="Eggeling L."/>
            <person name="Eikmanns B.J."/>
            <person name="Gaigalat L."/>
            <person name="Goesmann A."/>
            <person name="Hartmann M."/>
            <person name="Huthmacher K."/>
            <person name="Kraemer R."/>
            <person name="Linke B."/>
            <person name="McHardy A.C."/>
            <person name="Meyer F."/>
            <person name="Moeckel B."/>
            <person name="Pfefferle W."/>
            <person name="Puehler A."/>
            <person name="Rey D.A."/>
            <person name="Rueckert C."/>
            <person name="Rupp O."/>
            <person name="Sahm H."/>
            <person name="Wendisch V.F."/>
            <person name="Wiegraebe I."/>
            <person name="Tauch A."/>
        </authorList>
    </citation>
    <scope>NUCLEOTIDE SEQUENCE [LARGE SCALE GENOMIC DNA]</scope>
    <source>
        <strain>ATCC 13032 / DSM 20300 / JCM 1318 / BCRC 11384 / CCUG 27702 / LMG 3730 / NBRC 12168 / NCIMB 10025 / NRRL B-2784 / 534</strain>
    </source>
</reference>